<sequence length="201" mass="22087">MELVLKDAQSALTVSETTFGRDFNEALVHQVVVAYAAGARQGTRAQKTRAEVTGSGKKPWRQKGTGRARSGSIKSPIWRSGGVTFAARPQDHSQKVNKKMYRGALKSILSELVRQDRLIVVEKFSVEAPKTKLLAQKLKDMALEDVLIITGELDENLFLAARNLHKVDVRDATGIDPVSLIAFDKVVMTADAVKQVEEMLA</sequence>
<feature type="chain" id="PRO_1000052381" description="Large ribosomal subunit protein uL4">
    <location>
        <begin position="1"/>
        <end position="201"/>
    </location>
</feature>
<feature type="region of interest" description="Disordered" evidence="2">
    <location>
        <begin position="44"/>
        <end position="71"/>
    </location>
</feature>
<evidence type="ECO:0000255" key="1">
    <source>
        <dbReference type="HAMAP-Rule" id="MF_01328"/>
    </source>
</evidence>
<evidence type="ECO:0000256" key="2">
    <source>
        <dbReference type="SAM" id="MobiDB-lite"/>
    </source>
</evidence>
<evidence type="ECO:0000305" key="3"/>
<keyword id="KW-1185">Reference proteome</keyword>
<keyword id="KW-0687">Ribonucleoprotein</keyword>
<keyword id="KW-0689">Ribosomal protein</keyword>
<keyword id="KW-0694">RNA-binding</keyword>
<keyword id="KW-0699">rRNA-binding</keyword>
<comment type="function">
    <text evidence="1">One of the primary rRNA binding proteins, this protein initially binds near the 5'-end of the 23S rRNA. It is important during the early stages of 50S assembly. It makes multiple contacts with different domains of the 23S rRNA in the assembled 50S subunit and ribosome.</text>
</comment>
<comment type="function">
    <text evidence="1">Forms part of the polypeptide exit tunnel.</text>
</comment>
<comment type="subunit">
    <text evidence="1">Part of the 50S ribosomal subunit.</text>
</comment>
<comment type="similarity">
    <text evidence="1">Belongs to the universal ribosomal protein uL4 family.</text>
</comment>
<gene>
    <name evidence="1" type="primary">rplD</name>
    <name type="ordered locus">CKO_04737</name>
</gene>
<dbReference type="EMBL" id="CP000822">
    <property type="protein sequence ID" value="ABV15782.1"/>
    <property type="molecule type" value="Genomic_DNA"/>
</dbReference>
<dbReference type="RefSeq" id="WP_000424395.1">
    <property type="nucleotide sequence ID" value="NC_009792.1"/>
</dbReference>
<dbReference type="SMR" id="A8AQL8"/>
<dbReference type="STRING" id="290338.CKO_04737"/>
<dbReference type="GeneID" id="97442859"/>
<dbReference type="KEGG" id="cko:CKO_04737"/>
<dbReference type="HOGENOM" id="CLU_041575_5_2_6"/>
<dbReference type="OrthoDB" id="9803201at2"/>
<dbReference type="Proteomes" id="UP000008148">
    <property type="component" value="Chromosome"/>
</dbReference>
<dbReference type="GO" id="GO:1990904">
    <property type="term" value="C:ribonucleoprotein complex"/>
    <property type="evidence" value="ECO:0007669"/>
    <property type="project" value="UniProtKB-KW"/>
</dbReference>
<dbReference type="GO" id="GO:0005840">
    <property type="term" value="C:ribosome"/>
    <property type="evidence" value="ECO:0007669"/>
    <property type="project" value="UniProtKB-KW"/>
</dbReference>
<dbReference type="GO" id="GO:0019843">
    <property type="term" value="F:rRNA binding"/>
    <property type="evidence" value="ECO:0007669"/>
    <property type="project" value="UniProtKB-UniRule"/>
</dbReference>
<dbReference type="GO" id="GO:0003735">
    <property type="term" value="F:structural constituent of ribosome"/>
    <property type="evidence" value="ECO:0007669"/>
    <property type="project" value="InterPro"/>
</dbReference>
<dbReference type="GO" id="GO:0006412">
    <property type="term" value="P:translation"/>
    <property type="evidence" value="ECO:0007669"/>
    <property type="project" value="UniProtKB-UniRule"/>
</dbReference>
<dbReference type="FunFam" id="3.40.1370.10:FF:000001">
    <property type="entry name" value="50S ribosomal protein L4"/>
    <property type="match status" value="1"/>
</dbReference>
<dbReference type="Gene3D" id="3.40.1370.10">
    <property type="match status" value="1"/>
</dbReference>
<dbReference type="HAMAP" id="MF_01328_B">
    <property type="entry name" value="Ribosomal_uL4_B"/>
    <property type="match status" value="1"/>
</dbReference>
<dbReference type="InterPro" id="IPR002136">
    <property type="entry name" value="Ribosomal_uL4"/>
</dbReference>
<dbReference type="InterPro" id="IPR013005">
    <property type="entry name" value="Ribosomal_uL4-like"/>
</dbReference>
<dbReference type="InterPro" id="IPR023574">
    <property type="entry name" value="Ribosomal_uL4_dom_sf"/>
</dbReference>
<dbReference type="NCBIfam" id="TIGR03953">
    <property type="entry name" value="rplD_bact"/>
    <property type="match status" value="1"/>
</dbReference>
<dbReference type="PANTHER" id="PTHR10746">
    <property type="entry name" value="50S RIBOSOMAL PROTEIN L4"/>
    <property type="match status" value="1"/>
</dbReference>
<dbReference type="PANTHER" id="PTHR10746:SF6">
    <property type="entry name" value="LARGE RIBOSOMAL SUBUNIT PROTEIN UL4M"/>
    <property type="match status" value="1"/>
</dbReference>
<dbReference type="Pfam" id="PF00573">
    <property type="entry name" value="Ribosomal_L4"/>
    <property type="match status" value="1"/>
</dbReference>
<dbReference type="SUPFAM" id="SSF52166">
    <property type="entry name" value="Ribosomal protein L4"/>
    <property type="match status" value="1"/>
</dbReference>
<protein>
    <recommendedName>
        <fullName evidence="1">Large ribosomal subunit protein uL4</fullName>
    </recommendedName>
    <alternativeName>
        <fullName evidence="3">50S ribosomal protein L4</fullName>
    </alternativeName>
</protein>
<reference key="1">
    <citation type="submission" date="2007-08" db="EMBL/GenBank/DDBJ databases">
        <authorList>
            <consortium name="The Citrobacter koseri Genome Sequencing Project"/>
            <person name="McClelland M."/>
            <person name="Sanderson E.K."/>
            <person name="Porwollik S."/>
            <person name="Spieth J."/>
            <person name="Clifton W.S."/>
            <person name="Latreille P."/>
            <person name="Courtney L."/>
            <person name="Wang C."/>
            <person name="Pepin K."/>
            <person name="Bhonagiri V."/>
            <person name="Nash W."/>
            <person name="Johnson M."/>
            <person name="Thiruvilangam P."/>
            <person name="Wilson R."/>
        </authorList>
    </citation>
    <scope>NUCLEOTIDE SEQUENCE [LARGE SCALE GENOMIC DNA]</scope>
    <source>
        <strain>ATCC BAA-895 / CDC 4225-83 / SGSC4696</strain>
    </source>
</reference>
<organism>
    <name type="scientific">Citrobacter koseri (strain ATCC BAA-895 / CDC 4225-83 / SGSC4696)</name>
    <dbReference type="NCBI Taxonomy" id="290338"/>
    <lineage>
        <taxon>Bacteria</taxon>
        <taxon>Pseudomonadati</taxon>
        <taxon>Pseudomonadota</taxon>
        <taxon>Gammaproteobacteria</taxon>
        <taxon>Enterobacterales</taxon>
        <taxon>Enterobacteriaceae</taxon>
        <taxon>Citrobacter</taxon>
    </lineage>
</organism>
<name>RL4_CITK8</name>
<proteinExistence type="inferred from homology"/>
<accession>A8AQL8</accession>